<reference key="1">
    <citation type="journal article" date="1992" name="Plant Mol. Biol.">
        <title>The glucosinolate-degrading enzyme myrosinase in Brassicaceae is encoded by a gene family.</title>
        <authorList>
            <person name="Xue J."/>
            <person name="Lenman M."/>
            <person name="Falk A."/>
            <person name="Rask L."/>
        </authorList>
    </citation>
    <scope>NUCLEOTIDE SEQUENCE [MRNA]</scope>
    <scope>PARTIAL PROTEIN SEQUENCE</scope>
    <source>
        <strain>cv. Maxi</strain>
        <tissue>Seed</tissue>
    </source>
</reference>
<sequence length="243" mass="28184">EFFHGWYMEPLTKGRYPDIMRQIVGTRLPNFTEDEAELVAGSYDFLGLNYYVTQYAKPKPNPYPSEKHTAMDDAGVDLTFKNSRGEYPGPVFAEDANSYYYPKGIYYVMDYFKTKYGNPLIYITENGISTPGSESRCERIADYKRINYHCSHLCFLSKVIKEKGVNVRGYFAWALGDNYEFGKGFTVRFGLSYVNWDDLNDRNLKESGKWYQRFINGTAKNPVKQNFLRSSLSSQNQKKRLAC</sequence>
<feature type="chain" id="PRO_0000063903" description="Myrosinase MB2">
    <location>
        <begin position="1" status="less than"/>
        <end position="243"/>
    </location>
</feature>
<feature type="active site" description="Nucleophile" evidence="3">
    <location>
        <position position="125"/>
    </location>
</feature>
<feature type="binding site" evidence="1">
    <location>
        <position position="51"/>
    </location>
    <ligand>
        <name>substrate</name>
    </ligand>
</feature>
<feature type="binding site" evidence="1">
    <location>
        <position position="173"/>
    </location>
    <ligand>
        <name>substrate</name>
    </ligand>
</feature>
<feature type="binding site" evidence="1">
    <location>
        <begin position="180"/>
        <end position="181"/>
    </location>
    <ligand>
        <name>substrate</name>
    </ligand>
</feature>
<feature type="glycosylation site" description="N-linked (GlcNAc...) asparagine" evidence="2">
    <location>
        <position position="30"/>
    </location>
</feature>
<feature type="glycosylation site" description="N-linked (GlcNAc...) asparagine" evidence="2">
    <location>
        <position position="216"/>
    </location>
</feature>
<feature type="non-terminal residue">
    <location>
        <position position="1"/>
    </location>
</feature>
<accession>P29738</accession>
<keyword id="KW-0903">Direct protein sequencing</keyword>
<keyword id="KW-0325">Glycoprotein</keyword>
<keyword id="KW-0326">Glycosidase</keyword>
<keyword id="KW-0378">Hydrolase</keyword>
<keyword id="KW-0926">Vacuole</keyword>
<proteinExistence type="evidence at protein level"/>
<organism>
    <name type="scientific">Sinapis alba</name>
    <name type="common">White mustard</name>
    <name type="synonym">Brassica hirta</name>
    <dbReference type="NCBI Taxonomy" id="3728"/>
    <lineage>
        <taxon>Eukaryota</taxon>
        <taxon>Viridiplantae</taxon>
        <taxon>Streptophyta</taxon>
        <taxon>Embryophyta</taxon>
        <taxon>Tracheophyta</taxon>
        <taxon>Spermatophyta</taxon>
        <taxon>Magnoliopsida</taxon>
        <taxon>eudicotyledons</taxon>
        <taxon>Gunneridae</taxon>
        <taxon>Pentapetalae</taxon>
        <taxon>rosids</taxon>
        <taxon>malvids</taxon>
        <taxon>Brassicales</taxon>
        <taxon>Brassicaceae</taxon>
        <taxon>Brassiceae</taxon>
        <taxon>Sinapis</taxon>
    </lineage>
</organism>
<protein>
    <recommendedName>
        <fullName>Myrosinase MB2</fullName>
        <ecNumber>3.2.1.147</ecNumber>
    </recommendedName>
    <alternativeName>
        <fullName>Sinigrinase</fullName>
    </alternativeName>
    <alternativeName>
        <fullName>Thioglucosidase</fullName>
    </alternativeName>
</protein>
<evidence type="ECO:0000250" key="1"/>
<evidence type="ECO:0000255" key="2"/>
<evidence type="ECO:0000255" key="3">
    <source>
        <dbReference type="PROSITE-ProRule" id="PRU10055"/>
    </source>
</evidence>
<evidence type="ECO:0000305" key="4"/>
<comment type="function">
    <text>Degradation of glucosinolates (glucose residue linked by a thioglucoside bound to an amino acid derivative) to glucose, sulfate and any of the products: thiocyanates, isothiocyanates, nitriles, epithionitriles or oxazolidine-2-thiones.</text>
</comment>
<comment type="catalytic activity">
    <reaction>
        <text>a thioglucoside + H2O = a sugar + a thiol.</text>
        <dbReference type="EC" id="3.2.1.147"/>
    </reaction>
</comment>
<comment type="subunit">
    <text>Homodimer.</text>
</comment>
<comment type="subcellular location">
    <subcellularLocation>
        <location>Vacuole</location>
    </subcellularLocation>
</comment>
<comment type="tissue specificity">
    <text>In vacuoles called myrosin grains of a certain class of cells, myrosin cells, distributed in the cotyledons and the axis of the embryo as well as in different organs of the growing plant.</text>
</comment>
<comment type="similarity">
    <text evidence="4">Belongs to the glycosyl hydrolase 1 family.</text>
</comment>
<dbReference type="EC" id="3.2.1.147"/>
<dbReference type="EMBL" id="X59880">
    <property type="protein sequence ID" value="CAA42535.1"/>
    <property type="molecule type" value="mRNA"/>
</dbReference>
<dbReference type="PIR" id="S19148">
    <property type="entry name" value="S19148"/>
</dbReference>
<dbReference type="SMR" id="P29738"/>
<dbReference type="CAZy" id="GH1">
    <property type="family name" value="Glycoside Hydrolase Family 1"/>
</dbReference>
<dbReference type="GO" id="GO:0005773">
    <property type="term" value="C:vacuole"/>
    <property type="evidence" value="ECO:0007669"/>
    <property type="project" value="UniProtKB-SubCell"/>
</dbReference>
<dbReference type="GO" id="GO:0008422">
    <property type="term" value="F:beta-glucosidase activity"/>
    <property type="evidence" value="ECO:0007669"/>
    <property type="project" value="TreeGrafter"/>
</dbReference>
<dbReference type="GO" id="GO:0019137">
    <property type="term" value="F:thioglucosidase activity"/>
    <property type="evidence" value="ECO:0007669"/>
    <property type="project" value="UniProtKB-EC"/>
</dbReference>
<dbReference type="GO" id="GO:0005975">
    <property type="term" value="P:carbohydrate metabolic process"/>
    <property type="evidence" value="ECO:0007669"/>
    <property type="project" value="InterPro"/>
</dbReference>
<dbReference type="Gene3D" id="3.20.20.80">
    <property type="entry name" value="Glycosidases"/>
    <property type="match status" value="1"/>
</dbReference>
<dbReference type="InterPro" id="IPR001360">
    <property type="entry name" value="Glyco_hydro_1"/>
</dbReference>
<dbReference type="InterPro" id="IPR018120">
    <property type="entry name" value="Glyco_hydro_1_AS"/>
</dbReference>
<dbReference type="InterPro" id="IPR017853">
    <property type="entry name" value="Glycoside_hydrolase_SF"/>
</dbReference>
<dbReference type="PANTHER" id="PTHR10353">
    <property type="entry name" value="GLYCOSYL HYDROLASE"/>
    <property type="match status" value="1"/>
</dbReference>
<dbReference type="PANTHER" id="PTHR10353:SF231">
    <property type="entry name" value="THIOGLUCOSIDASE"/>
    <property type="match status" value="1"/>
</dbReference>
<dbReference type="Pfam" id="PF00232">
    <property type="entry name" value="Glyco_hydro_1"/>
    <property type="match status" value="1"/>
</dbReference>
<dbReference type="PRINTS" id="PR00131">
    <property type="entry name" value="GLHYDRLASE1"/>
</dbReference>
<dbReference type="SUPFAM" id="SSF51445">
    <property type="entry name" value="(Trans)glycosidases"/>
    <property type="match status" value="1"/>
</dbReference>
<dbReference type="PROSITE" id="PS00572">
    <property type="entry name" value="GLYCOSYL_HYDROL_F1_1"/>
    <property type="match status" value="1"/>
</dbReference>
<name>MYR2_SINAL</name>